<reference key="1">
    <citation type="journal article" date="2010" name="Appl. Environ. Microbiol.">
        <title>The genome sequence of Psychrobacter arcticus 273-4, a psychroactive Siberian permafrost bacterium, reveals mechanisms for adaptation to low-temperature growth.</title>
        <authorList>
            <person name="Ayala-del-Rio H.L."/>
            <person name="Chain P.S."/>
            <person name="Grzymski J.J."/>
            <person name="Ponder M.A."/>
            <person name="Ivanova N."/>
            <person name="Bergholz P.W."/>
            <person name="Di Bartolo G."/>
            <person name="Hauser L."/>
            <person name="Land M."/>
            <person name="Bakermans C."/>
            <person name="Rodrigues D."/>
            <person name="Klappenbach J."/>
            <person name="Zarka D."/>
            <person name="Larimer F."/>
            <person name="Richardson P."/>
            <person name="Murray A."/>
            <person name="Thomashow M."/>
            <person name="Tiedje J.M."/>
        </authorList>
    </citation>
    <scope>NUCLEOTIDE SEQUENCE [LARGE SCALE GENOMIC DNA]</scope>
    <source>
        <strain>DSM 17307 / VKM B-2377 / 273-4</strain>
    </source>
</reference>
<protein>
    <recommendedName>
        <fullName evidence="1">Protein translocase subunit SecA</fullName>
        <ecNumber evidence="1">7.4.2.8</ecNumber>
    </recommendedName>
</protein>
<feature type="chain" id="PRO_0000320906" description="Protein translocase subunit SecA">
    <location>
        <begin position="1"/>
        <end position="929"/>
    </location>
</feature>
<feature type="binding site" evidence="1">
    <location>
        <position position="87"/>
    </location>
    <ligand>
        <name>ATP</name>
        <dbReference type="ChEBI" id="CHEBI:30616"/>
    </ligand>
</feature>
<feature type="binding site" evidence="1">
    <location>
        <begin position="105"/>
        <end position="109"/>
    </location>
    <ligand>
        <name>ATP</name>
        <dbReference type="ChEBI" id="CHEBI:30616"/>
    </ligand>
</feature>
<feature type="binding site" evidence="1">
    <location>
        <position position="512"/>
    </location>
    <ligand>
        <name>ATP</name>
        <dbReference type="ChEBI" id="CHEBI:30616"/>
    </ligand>
</feature>
<feature type="binding site" evidence="1">
    <location>
        <position position="914"/>
    </location>
    <ligand>
        <name>Zn(2+)</name>
        <dbReference type="ChEBI" id="CHEBI:29105"/>
    </ligand>
</feature>
<feature type="binding site" evidence="1">
    <location>
        <position position="916"/>
    </location>
    <ligand>
        <name>Zn(2+)</name>
        <dbReference type="ChEBI" id="CHEBI:29105"/>
    </ligand>
</feature>
<feature type="binding site" evidence="1">
    <location>
        <position position="925"/>
    </location>
    <ligand>
        <name>Zn(2+)</name>
        <dbReference type="ChEBI" id="CHEBI:29105"/>
    </ligand>
</feature>
<feature type="binding site" evidence="1">
    <location>
        <position position="926"/>
    </location>
    <ligand>
        <name>Zn(2+)</name>
        <dbReference type="ChEBI" id="CHEBI:29105"/>
    </ligand>
</feature>
<evidence type="ECO:0000255" key="1">
    <source>
        <dbReference type="HAMAP-Rule" id="MF_01382"/>
    </source>
</evidence>
<proteinExistence type="inferred from homology"/>
<organism>
    <name type="scientific">Psychrobacter arcticus (strain DSM 17307 / VKM B-2377 / 273-4)</name>
    <dbReference type="NCBI Taxonomy" id="259536"/>
    <lineage>
        <taxon>Bacteria</taxon>
        <taxon>Pseudomonadati</taxon>
        <taxon>Pseudomonadota</taxon>
        <taxon>Gammaproteobacteria</taxon>
        <taxon>Moraxellales</taxon>
        <taxon>Moraxellaceae</taxon>
        <taxon>Psychrobacter</taxon>
    </lineage>
</organism>
<keyword id="KW-0067">ATP-binding</keyword>
<keyword id="KW-0997">Cell inner membrane</keyword>
<keyword id="KW-1003">Cell membrane</keyword>
<keyword id="KW-0963">Cytoplasm</keyword>
<keyword id="KW-0472">Membrane</keyword>
<keyword id="KW-0479">Metal-binding</keyword>
<keyword id="KW-0547">Nucleotide-binding</keyword>
<keyword id="KW-0653">Protein transport</keyword>
<keyword id="KW-1185">Reference proteome</keyword>
<keyword id="KW-1278">Translocase</keyword>
<keyword id="KW-0811">Translocation</keyword>
<keyword id="KW-0813">Transport</keyword>
<keyword id="KW-0862">Zinc</keyword>
<accession>Q4FV40</accession>
<name>SECA_PSYA2</name>
<comment type="function">
    <text evidence="1">Part of the Sec protein translocase complex. Interacts with the SecYEG preprotein conducting channel. Has a central role in coupling the hydrolysis of ATP to the transfer of proteins into and across the cell membrane, serving both as a receptor for the preprotein-SecB complex and as an ATP-driven molecular motor driving the stepwise translocation of polypeptide chains across the membrane.</text>
</comment>
<comment type="catalytic activity">
    <reaction evidence="1">
        <text>ATP + H2O + cellular proteinSide 1 = ADP + phosphate + cellular proteinSide 2.</text>
        <dbReference type="EC" id="7.4.2.8"/>
    </reaction>
</comment>
<comment type="cofactor">
    <cofactor evidence="1">
        <name>Zn(2+)</name>
        <dbReference type="ChEBI" id="CHEBI:29105"/>
    </cofactor>
    <text evidence="1">May bind 1 zinc ion per subunit.</text>
</comment>
<comment type="subunit">
    <text evidence="1">Monomer and homodimer. Part of the essential Sec protein translocation apparatus which comprises SecA, SecYEG and auxiliary proteins SecDF-YajC and YidC.</text>
</comment>
<comment type="subcellular location">
    <subcellularLocation>
        <location evidence="1">Cell inner membrane</location>
        <topology evidence="1">Peripheral membrane protein</topology>
        <orientation evidence="1">Cytoplasmic side</orientation>
    </subcellularLocation>
    <subcellularLocation>
        <location evidence="1">Cytoplasm</location>
    </subcellularLocation>
    <text evidence="1">Distribution is 50-50.</text>
</comment>
<comment type="similarity">
    <text evidence="1">Belongs to the SecA family.</text>
</comment>
<dbReference type="EC" id="7.4.2.8" evidence="1"/>
<dbReference type="EMBL" id="CP000082">
    <property type="protein sequence ID" value="AAZ18118.1"/>
    <property type="molecule type" value="Genomic_DNA"/>
</dbReference>
<dbReference type="RefSeq" id="WP_011279556.1">
    <property type="nucleotide sequence ID" value="NC_007204.1"/>
</dbReference>
<dbReference type="SMR" id="Q4FV40"/>
<dbReference type="STRING" id="259536.Psyc_0248"/>
<dbReference type="KEGG" id="par:Psyc_0248"/>
<dbReference type="eggNOG" id="COG0653">
    <property type="taxonomic scope" value="Bacteria"/>
</dbReference>
<dbReference type="HOGENOM" id="CLU_005314_3_0_6"/>
<dbReference type="OrthoDB" id="9805579at2"/>
<dbReference type="Proteomes" id="UP000000546">
    <property type="component" value="Chromosome"/>
</dbReference>
<dbReference type="GO" id="GO:0031522">
    <property type="term" value="C:cell envelope Sec protein transport complex"/>
    <property type="evidence" value="ECO:0007669"/>
    <property type="project" value="TreeGrafter"/>
</dbReference>
<dbReference type="GO" id="GO:0005829">
    <property type="term" value="C:cytosol"/>
    <property type="evidence" value="ECO:0007669"/>
    <property type="project" value="TreeGrafter"/>
</dbReference>
<dbReference type="GO" id="GO:0005886">
    <property type="term" value="C:plasma membrane"/>
    <property type="evidence" value="ECO:0007669"/>
    <property type="project" value="UniProtKB-SubCell"/>
</dbReference>
<dbReference type="GO" id="GO:0005524">
    <property type="term" value="F:ATP binding"/>
    <property type="evidence" value="ECO:0007669"/>
    <property type="project" value="UniProtKB-UniRule"/>
</dbReference>
<dbReference type="GO" id="GO:0046872">
    <property type="term" value="F:metal ion binding"/>
    <property type="evidence" value="ECO:0007669"/>
    <property type="project" value="UniProtKB-KW"/>
</dbReference>
<dbReference type="GO" id="GO:0008564">
    <property type="term" value="F:protein-exporting ATPase activity"/>
    <property type="evidence" value="ECO:0007669"/>
    <property type="project" value="UniProtKB-EC"/>
</dbReference>
<dbReference type="GO" id="GO:0065002">
    <property type="term" value="P:intracellular protein transmembrane transport"/>
    <property type="evidence" value="ECO:0007669"/>
    <property type="project" value="UniProtKB-UniRule"/>
</dbReference>
<dbReference type="GO" id="GO:0017038">
    <property type="term" value="P:protein import"/>
    <property type="evidence" value="ECO:0007669"/>
    <property type="project" value="InterPro"/>
</dbReference>
<dbReference type="GO" id="GO:0006605">
    <property type="term" value="P:protein targeting"/>
    <property type="evidence" value="ECO:0007669"/>
    <property type="project" value="UniProtKB-UniRule"/>
</dbReference>
<dbReference type="GO" id="GO:0043952">
    <property type="term" value="P:protein transport by the Sec complex"/>
    <property type="evidence" value="ECO:0007669"/>
    <property type="project" value="TreeGrafter"/>
</dbReference>
<dbReference type="CDD" id="cd17928">
    <property type="entry name" value="DEXDc_SecA"/>
    <property type="match status" value="1"/>
</dbReference>
<dbReference type="CDD" id="cd18803">
    <property type="entry name" value="SF2_C_secA"/>
    <property type="match status" value="1"/>
</dbReference>
<dbReference type="FunFam" id="3.40.50.300:FF:000113">
    <property type="entry name" value="Preprotein translocase subunit SecA"/>
    <property type="match status" value="1"/>
</dbReference>
<dbReference type="FunFam" id="3.90.1440.10:FF:000001">
    <property type="entry name" value="Preprotein translocase subunit SecA"/>
    <property type="match status" value="1"/>
</dbReference>
<dbReference type="FunFam" id="1.10.3060.10:FF:000003">
    <property type="entry name" value="Protein translocase subunit SecA"/>
    <property type="match status" value="1"/>
</dbReference>
<dbReference type="Gene3D" id="1.10.3060.10">
    <property type="entry name" value="Helical scaffold and wing domains of SecA"/>
    <property type="match status" value="1"/>
</dbReference>
<dbReference type="Gene3D" id="3.40.50.300">
    <property type="entry name" value="P-loop containing nucleotide triphosphate hydrolases"/>
    <property type="match status" value="2"/>
</dbReference>
<dbReference type="Gene3D" id="3.90.1440.10">
    <property type="entry name" value="SecA, preprotein cross-linking domain"/>
    <property type="match status" value="1"/>
</dbReference>
<dbReference type="HAMAP" id="MF_01382">
    <property type="entry name" value="SecA"/>
    <property type="match status" value="1"/>
</dbReference>
<dbReference type="InterPro" id="IPR014001">
    <property type="entry name" value="Helicase_ATP-bd"/>
</dbReference>
<dbReference type="InterPro" id="IPR001650">
    <property type="entry name" value="Helicase_C-like"/>
</dbReference>
<dbReference type="InterPro" id="IPR027417">
    <property type="entry name" value="P-loop_NTPase"/>
</dbReference>
<dbReference type="InterPro" id="IPR004027">
    <property type="entry name" value="SEC_C_motif"/>
</dbReference>
<dbReference type="InterPro" id="IPR000185">
    <property type="entry name" value="SecA"/>
</dbReference>
<dbReference type="InterPro" id="IPR020937">
    <property type="entry name" value="SecA_CS"/>
</dbReference>
<dbReference type="InterPro" id="IPR011115">
    <property type="entry name" value="SecA_DEAD"/>
</dbReference>
<dbReference type="InterPro" id="IPR014018">
    <property type="entry name" value="SecA_motor_DEAD"/>
</dbReference>
<dbReference type="InterPro" id="IPR011130">
    <property type="entry name" value="SecA_preprotein_X-link_dom"/>
</dbReference>
<dbReference type="InterPro" id="IPR044722">
    <property type="entry name" value="SecA_SF2_C"/>
</dbReference>
<dbReference type="InterPro" id="IPR011116">
    <property type="entry name" value="SecA_Wing/Scaffold"/>
</dbReference>
<dbReference type="InterPro" id="IPR036266">
    <property type="entry name" value="SecA_Wing/Scaffold_sf"/>
</dbReference>
<dbReference type="InterPro" id="IPR036670">
    <property type="entry name" value="SecA_X-link_sf"/>
</dbReference>
<dbReference type="NCBIfam" id="NF009538">
    <property type="entry name" value="PRK12904.1"/>
    <property type="match status" value="1"/>
</dbReference>
<dbReference type="NCBIfam" id="TIGR00963">
    <property type="entry name" value="secA"/>
    <property type="match status" value="1"/>
</dbReference>
<dbReference type="PANTHER" id="PTHR30612:SF0">
    <property type="entry name" value="CHLOROPLAST PROTEIN-TRANSPORTING ATPASE"/>
    <property type="match status" value="1"/>
</dbReference>
<dbReference type="PANTHER" id="PTHR30612">
    <property type="entry name" value="SECA INNER MEMBRANE COMPONENT OF SEC PROTEIN SECRETION SYSTEM"/>
    <property type="match status" value="1"/>
</dbReference>
<dbReference type="Pfam" id="PF21090">
    <property type="entry name" value="P-loop_SecA"/>
    <property type="match status" value="1"/>
</dbReference>
<dbReference type="Pfam" id="PF02810">
    <property type="entry name" value="SEC-C"/>
    <property type="match status" value="1"/>
</dbReference>
<dbReference type="Pfam" id="PF07517">
    <property type="entry name" value="SecA_DEAD"/>
    <property type="match status" value="1"/>
</dbReference>
<dbReference type="Pfam" id="PF01043">
    <property type="entry name" value="SecA_PP_bind"/>
    <property type="match status" value="1"/>
</dbReference>
<dbReference type="Pfam" id="PF07516">
    <property type="entry name" value="SecA_SW"/>
    <property type="match status" value="1"/>
</dbReference>
<dbReference type="PRINTS" id="PR00906">
    <property type="entry name" value="SECA"/>
</dbReference>
<dbReference type="SMART" id="SM00957">
    <property type="entry name" value="SecA_DEAD"/>
    <property type="match status" value="1"/>
</dbReference>
<dbReference type="SMART" id="SM00958">
    <property type="entry name" value="SecA_PP_bind"/>
    <property type="match status" value="1"/>
</dbReference>
<dbReference type="SUPFAM" id="SSF81886">
    <property type="entry name" value="Helical scaffold and wing domains of SecA"/>
    <property type="match status" value="1"/>
</dbReference>
<dbReference type="SUPFAM" id="SSF52540">
    <property type="entry name" value="P-loop containing nucleoside triphosphate hydrolases"/>
    <property type="match status" value="2"/>
</dbReference>
<dbReference type="SUPFAM" id="SSF81767">
    <property type="entry name" value="Pre-protein crosslinking domain of SecA"/>
    <property type="match status" value="1"/>
</dbReference>
<dbReference type="PROSITE" id="PS01312">
    <property type="entry name" value="SECA"/>
    <property type="match status" value="1"/>
</dbReference>
<dbReference type="PROSITE" id="PS51196">
    <property type="entry name" value="SECA_MOTOR_DEAD"/>
    <property type="match status" value="1"/>
</dbReference>
<gene>
    <name evidence="1" type="primary">secA</name>
    <name type="ordered locus">Psyc_0248</name>
</gene>
<sequence>MLSKIIGSVVGTKNERELKRMHKVVSKINAYEATIQALSDEQLQQKTEEFKARHQNGESLDALLPEAFAVCREASLRVNGMRHYDVQLIGGITLHEGKIAEMKTGEGKTLMGTLAMYLNAISGKGVHLVTVNDYLAARDAELNRPLFGFLGMNVGVIYSQQPPQEKVAAYQADITYGTNNEYGFDYLRDNMVFSLREKKQRPLNFCIIDEIDSILIDEARTPLIISGQAEDSSRMYALINTIIPVLIRSKDEEANKNNEEEDFWIDEKNRQIEISEKGYEKIERFLIEVGELGENESLYSPSRLPLLAHVQAAIRAHHVFVKNIHYIVDDGEVVIVDENTGRTMPGRRWSEGLHQAVEAKENVEIQAENQTLATTTFQNFFRLYDKLSGMTGTADTEAAEFKSTYDLDVIVIPTHEPIARIDMDDQIFLTKLGKYKGIIREIQEIQAKGAPVLVGTATIEASEELSYLLDQEGVKHNVLNAKQHEREAEIIAQAGSPKSVTIATNMAGRGTDIILGGNWQSFIEDIDSVSPEEMQRLKAQWQIKHDQVVAAGGLHIIGSERHESRRIDNQLRGRAGRQGDPGMSRFFLSLEDDLMRIFAGDRVVNMMRAMGLKEDEAIEHKMVSKSIENAQGKVESRDFDARKNLLKYDDVANDQRKVIYGQRDDLLAEMDLLQAIKIMHQEVYNAMINQFIPPGSIDDQWNVDGLEDELENEFKIAMPINDWLDEDRRLDEEGLRAKLIQTALDRYDNRREQMGEKEAAQLERHFMLQSLDKHWKEHLTQMDQLRKGIHLRGYAQKNPEQEYKRESFELFQMMLGAIKSETVQDLSRVHIPTKEELAALEVQQRENAAHMQMQFEHSDIDNMDGGVERAAVQGRNVVAGAAGAGVAGAMAGNGNNDNEPNPYAGMNISRNAPCPCGSALKYKQCHGKI</sequence>